<gene>
    <name evidence="1" type="primary">rpsB</name>
    <name type="ordered locus">SPJ_2241</name>
</gene>
<proteinExistence type="inferred from homology"/>
<reference key="1">
    <citation type="journal article" date="2010" name="Genome Biol.">
        <title>Structure and dynamics of the pan-genome of Streptococcus pneumoniae and closely related species.</title>
        <authorList>
            <person name="Donati C."/>
            <person name="Hiller N.L."/>
            <person name="Tettelin H."/>
            <person name="Muzzi A."/>
            <person name="Croucher N.J."/>
            <person name="Angiuoli S.V."/>
            <person name="Oggioni M."/>
            <person name="Dunning Hotopp J.C."/>
            <person name="Hu F.Z."/>
            <person name="Riley D.R."/>
            <person name="Covacci A."/>
            <person name="Mitchell T.J."/>
            <person name="Bentley S.D."/>
            <person name="Kilian M."/>
            <person name="Ehrlich G.D."/>
            <person name="Rappuoli R."/>
            <person name="Moxon E.R."/>
            <person name="Masignani V."/>
        </authorList>
    </citation>
    <scope>NUCLEOTIDE SEQUENCE [LARGE SCALE GENOMIC DNA]</scope>
    <source>
        <strain>JJA</strain>
    </source>
</reference>
<keyword id="KW-0687">Ribonucleoprotein</keyword>
<keyword id="KW-0689">Ribosomal protein</keyword>
<organism>
    <name type="scientific">Streptococcus pneumoniae (strain JJA)</name>
    <dbReference type="NCBI Taxonomy" id="488222"/>
    <lineage>
        <taxon>Bacteria</taxon>
        <taxon>Bacillati</taxon>
        <taxon>Bacillota</taxon>
        <taxon>Bacilli</taxon>
        <taxon>Lactobacillales</taxon>
        <taxon>Streptococcaceae</taxon>
        <taxon>Streptococcus</taxon>
    </lineage>
</organism>
<name>RS2_STRZJ</name>
<comment type="similarity">
    <text evidence="1">Belongs to the universal ribosomal protein uS2 family.</text>
</comment>
<dbReference type="EMBL" id="CP000919">
    <property type="protein sequence ID" value="ACO19287.1"/>
    <property type="molecule type" value="Genomic_DNA"/>
</dbReference>
<dbReference type="RefSeq" id="WP_000268466.1">
    <property type="nucleotide sequence ID" value="NC_012466.1"/>
</dbReference>
<dbReference type="SMR" id="C1CHL4"/>
<dbReference type="GeneID" id="45652565"/>
<dbReference type="KEGG" id="sjj:SPJ_2241"/>
<dbReference type="HOGENOM" id="CLU_040318_1_2_9"/>
<dbReference type="Proteomes" id="UP000002206">
    <property type="component" value="Chromosome"/>
</dbReference>
<dbReference type="GO" id="GO:0022627">
    <property type="term" value="C:cytosolic small ribosomal subunit"/>
    <property type="evidence" value="ECO:0007669"/>
    <property type="project" value="TreeGrafter"/>
</dbReference>
<dbReference type="GO" id="GO:0003735">
    <property type="term" value="F:structural constituent of ribosome"/>
    <property type="evidence" value="ECO:0007669"/>
    <property type="project" value="InterPro"/>
</dbReference>
<dbReference type="GO" id="GO:0006412">
    <property type="term" value="P:translation"/>
    <property type="evidence" value="ECO:0007669"/>
    <property type="project" value="UniProtKB-UniRule"/>
</dbReference>
<dbReference type="CDD" id="cd01425">
    <property type="entry name" value="RPS2"/>
    <property type="match status" value="1"/>
</dbReference>
<dbReference type="FunFam" id="1.10.287.610:FF:000001">
    <property type="entry name" value="30S ribosomal protein S2"/>
    <property type="match status" value="1"/>
</dbReference>
<dbReference type="Gene3D" id="3.40.50.10490">
    <property type="entry name" value="Glucose-6-phosphate isomerase like protein, domain 1"/>
    <property type="match status" value="1"/>
</dbReference>
<dbReference type="Gene3D" id="1.10.287.610">
    <property type="entry name" value="Helix hairpin bin"/>
    <property type="match status" value="1"/>
</dbReference>
<dbReference type="HAMAP" id="MF_00291_B">
    <property type="entry name" value="Ribosomal_uS2_B"/>
    <property type="match status" value="1"/>
</dbReference>
<dbReference type="InterPro" id="IPR001865">
    <property type="entry name" value="Ribosomal_uS2"/>
</dbReference>
<dbReference type="InterPro" id="IPR005706">
    <property type="entry name" value="Ribosomal_uS2_bac/mit/plastid"/>
</dbReference>
<dbReference type="InterPro" id="IPR018130">
    <property type="entry name" value="Ribosomal_uS2_CS"/>
</dbReference>
<dbReference type="InterPro" id="IPR023591">
    <property type="entry name" value="Ribosomal_uS2_flav_dom_sf"/>
</dbReference>
<dbReference type="NCBIfam" id="TIGR01011">
    <property type="entry name" value="rpsB_bact"/>
    <property type="match status" value="1"/>
</dbReference>
<dbReference type="PANTHER" id="PTHR12534">
    <property type="entry name" value="30S RIBOSOMAL PROTEIN S2 PROKARYOTIC AND ORGANELLAR"/>
    <property type="match status" value="1"/>
</dbReference>
<dbReference type="PANTHER" id="PTHR12534:SF0">
    <property type="entry name" value="SMALL RIBOSOMAL SUBUNIT PROTEIN US2M"/>
    <property type="match status" value="1"/>
</dbReference>
<dbReference type="Pfam" id="PF00318">
    <property type="entry name" value="Ribosomal_S2"/>
    <property type="match status" value="1"/>
</dbReference>
<dbReference type="PRINTS" id="PR00395">
    <property type="entry name" value="RIBOSOMALS2"/>
</dbReference>
<dbReference type="SUPFAM" id="SSF52313">
    <property type="entry name" value="Ribosomal protein S2"/>
    <property type="match status" value="1"/>
</dbReference>
<dbReference type="PROSITE" id="PS00962">
    <property type="entry name" value="RIBOSOMAL_S2_1"/>
    <property type="match status" value="1"/>
</dbReference>
<sequence length="259" mass="28841">MAVISMKQLLEAGVHFGHQTRRWNPKMAKYIFTERNGIHVIDLQQTVKYADQAYDFMRDAAANDAVVLFVGTKKQAADAVAEEAVRSGQYFINHRWLGGTLTNWGTIQKRIARLKEIKRMEEDGTFEVLPKKEVALLNKQRARLEKFLGGIEDMPRIPDVMYVVDPHKEQIAVKEAKKLGIPVVAMVDTNTDPDDIDVIIPANDDAIRAVKLITAKLADAIIEGRQGEDAVAVEAEFAASETQADSIEEIVEVVEGDNA</sequence>
<accession>C1CHL4</accession>
<feature type="chain" id="PRO_1000194349" description="Small ribosomal subunit protein uS2">
    <location>
        <begin position="1"/>
        <end position="259"/>
    </location>
</feature>
<evidence type="ECO:0000255" key="1">
    <source>
        <dbReference type="HAMAP-Rule" id="MF_00291"/>
    </source>
</evidence>
<evidence type="ECO:0000305" key="2"/>
<protein>
    <recommendedName>
        <fullName evidence="1">Small ribosomal subunit protein uS2</fullName>
    </recommendedName>
    <alternativeName>
        <fullName evidence="2">30S ribosomal protein S2</fullName>
    </alternativeName>
</protein>